<feature type="signal peptide" evidence="3">
    <location>
        <begin position="1"/>
        <end position="25"/>
    </location>
</feature>
<feature type="chain" id="PRO_0000025376" description="Pancreatic polypeptide">
    <location>
        <begin position="26"/>
        <end position="61"/>
    </location>
</feature>
<feature type="propeptide" id="PRO_0000025377">
    <location>
        <begin position="65"/>
        <end position="80"/>
    </location>
</feature>
<feature type="modified residue" description="Tyrosine amide" evidence="1">
    <location>
        <position position="61"/>
    </location>
</feature>
<feature type="sequence conflict" description="In Ref. 2; AA sequence." evidence="6" ref="2">
    <original>ND</original>
    <variation>DN</variation>
    <location>
        <begin position="47"/>
        <end position="48"/>
    </location>
</feature>
<accession>P68248</accession>
<accession>P01306</accession>
<sequence length="80" mass="8773">MPPRWASLLLLACSLLLLAVPPGTAGPSQPTYPGDDAPVEDLIRFYNDLQQYLNVVTRHRYGRRSSSRVLCEEPMGAAGC</sequence>
<keyword id="KW-0027">Amidation</keyword>
<keyword id="KW-0165">Cleavage on pair of basic residues</keyword>
<keyword id="KW-0903">Direct protein sequencing</keyword>
<keyword id="KW-0372">Hormone</keyword>
<keyword id="KW-1185">Reference proteome</keyword>
<keyword id="KW-0964">Secreted</keyword>
<keyword id="KW-0732">Signal</keyword>
<organism>
    <name type="scientific">Gallus gallus</name>
    <name type="common">Chicken</name>
    <dbReference type="NCBI Taxonomy" id="9031"/>
    <lineage>
        <taxon>Eukaryota</taxon>
        <taxon>Metazoa</taxon>
        <taxon>Chordata</taxon>
        <taxon>Craniata</taxon>
        <taxon>Vertebrata</taxon>
        <taxon>Euteleostomi</taxon>
        <taxon>Archelosauria</taxon>
        <taxon>Archosauria</taxon>
        <taxon>Dinosauria</taxon>
        <taxon>Saurischia</taxon>
        <taxon>Theropoda</taxon>
        <taxon>Coelurosauria</taxon>
        <taxon>Aves</taxon>
        <taxon>Neognathae</taxon>
        <taxon>Galloanserae</taxon>
        <taxon>Galliformes</taxon>
        <taxon>Phasianidae</taxon>
        <taxon>Phasianinae</taxon>
        <taxon>Gallus</taxon>
    </lineage>
</organism>
<name>PAHO_CHICK</name>
<dbReference type="EMBL" id="D13761">
    <property type="protein sequence ID" value="BAA02907.1"/>
    <property type="molecule type" value="Genomic_DNA"/>
</dbReference>
<dbReference type="EMBL" id="D13760">
    <property type="protein sequence ID" value="BAA02906.1"/>
    <property type="molecule type" value="mRNA"/>
</dbReference>
<dbReference type="PIR" id="JN0776">
    <property type="entry name" value="PCCH"/>
</dbReference>
<dbReference type="RefSeq" id="NP_990117.1">
    <property type="nucleotide sequence ID" value="NM_204786.1"/>
</dbReference>
<dbReference type="BMRB" id="P68248"/>
<dbReference type="SMR" id="P68248"/>
<dbReference type="STRING" id="9031.ENSGALP00000043946"/>
<dbReference type="PaxDb" id="9031-ENSGALP00000042719"/>
<dbReference type="Ensembl" id="ENSGALT00010061007.1">
    <property type="protein sequence ID" value="ENSGALP00010037750.1"/>
    <property type="gene ID" value="ENSGALG00010024981.1"/>
</dbReference>
<dbReference type="GeneID" id="395564"/>
<dbReference type="KEGG" id="gga:395564"/>
<dbReference type="CTD" id="5697"/>
<dbReference type="VEuPathDB" id="HostDB:geneid_395564"/>
<dbReference type="eggNOG" id="ENOG502S267">
    <property type="taxonomic scope" value="Eukaryota"/>
</dbReference>
<dbReference type="GeneTree" id="ENSGT00950000185319"/>
<dbReference type="HOGENOM" id="CLU_165150_1_0_1"/>
<dbReference type="InParanoid" id="P68248"/>
<dbReference type="OMA" id="MAATRRC"/>
<dbReference type="OrthoDB" id="9901897at2759"/>
<dbReference type="PhylomeDB" id="P68248"/>
<dbReference type="Reactome" id="R-GGA-375276">
    <property type="pathway name" value="Peptide ligand-binding receptors"/>
</dbReference>
<dbReference type="Reactome" id="R-GGA-418594">
    <property type="pathway name" value="G alpha (i) signalling events"/>
</dbReference>
<dbReference type="PRO" id="PR:P68248"/>
<dbReference type="Proteomes" id="UP000000539">
    <property type="component" value="Chromosome 27"/>
</dbReference>
<dbReference type="GO" id="GO:0005615">
    <property type="term" value="C:extracellular space"/>
    <property type="evidence" value="ECO:0000318"/>
    <property type="project" value="GO_Central"/>
</dbReference>
<dbReference type="GO" id="GO:0005184">
    <property type="term" value="F:neuropeptide hormone activity"/>
    <property type="evidence" value="ECO:0000318"/>
    <property type="project" value="GO_Central"/>
</dbReference>
<dbReference type="GO" id="GO:0031841">
    <property type="term" value="F:neuropeptide Y receptor binding"/>
    <property type="evidence" value="ECO:0000318"/>
    <property type="project" value="GO_Central"/>
</dbReference>
<dbReference type="GO" id="GO:0007631">
    <property type="term" value="P:feeding behavior"/>
    <property type="evidence" value="ECO:0000318"/>
    <property type="project" value="GO_Central"/>
</dbReference>
<dbReference type="GO" id="GO:0007218">
    <property type="term" value="P:neuropeptide signaling pathway"/>
    <property type="evidence" value="ECO:0000318"/>
    <property type="project" value="GO_Central"/>
</dbReference>
<dbReference type="CDD" id="cd00126">
    <property type="entry name" value="PAH"/>
    <property type="match status" value="1"/>
</dbReference>
<dbReference type="Gene3D" id="6.10.250.900">
    <property type="match status" value="1"/>
</dbReference>
<dbReference type="InterPro" id="IPR001955">
    <property type="entry name" value="Pancreatic_hormone-like"/>
</dbReference>
<dbReference type="InterPro" id="IPR020392">
    <property type="entry name" value="Pancreatic_hormone-like_CS"/>
</dbReference>
<dbReference type="PANTHER" id="PTHR10533">
    <property type="entry name" value="NEUROPEPTIDE Y/PANCREATIC HORMONE/PEPTIDE YY"/>
    <property type="match status" value="1"/>
</dbReference>
<dbReference type="PANTHER" id="PTHR10533:SF5">
    <property type="entry name" value="PRO-NEUROPEPTIDE Y"/>
    <property type="match status" value="1"/>
</dbReference>
<dbReference type="Pfam" id="PF00159">
    <property type="entry name" value="Hormone_3"/>
    <property type="match status" value="1"/>
</dbReference>
<dbReference type="PRINTS" id="PR00278">
    <property type="entry name" value="PANCHORMONE"/>
</dbReference>
<dbReference type="SMART" id="SM00309">
    <property type="entry name" value="PAH"/>
    <property type="match status" value="1"/>
</dbReference>
<dbReference type="PROSITE" id="PS00265">
    <property type="entry name" value="PANCREATIC_HORMONE_1"/>
    <property type="match status" value="1"/>
</dbReference>
<dbReference type="PROSITE" id="PS50276">
    <property type="entry name" value="PANCREATIC_HORMONE_2"/>
    <property type="match status" value="1"/>
</dbReference>
<comment type="function">
    <text evidence="2">Hormone secreted by pancreatic cells that acts as a regulator of pancreatic and gastrointestinal functions.</text>
</comment>
<comment type="subcellular location">
    <subcellularLocation>
        <location evidence="2">Secreted</location>
    </subcellularLocation>
</comment>
<comment type="similarity">
    <text evidence="6">Belongs to the NPY family.</text>
</comment>
<gene>
    <name type="primary">PPY</name>
</gene>
<proteinExistence type="evidence at protein level"/>
<protein>
    <recommendedName>
        <fullName evidence="4">Pancreatic polypeptide</fullName>
        <shortName evidence="4">APP</shortName>
        <shortName evidence="5">PPP</shortName>
    </recommendedName>
</protein>
<evidence type="ECO:0000250" key="1"/>
<evidence type="ECO:0000250" key="2">
    <source>
        <dbReference type="UniProtKB" id="P01298"/>
    </source>
</evidence>
<evidence type="ECO:0000269" key="3">
    <source>
    </source>
</evidence>
<evidence type="ECO:0000303" key="4">
    <source>
    </source>
</evidence>
<evidence type="ECO:0000303" key="5">
    <source>
    </source>
</evidence>
<evidence type="ECO:0000305" key="6"/>
<reference key="1">
    <citation type="journal article" date="1993" name="Gene">
        <title>Structure determination and evolution of the chicken cDNA and gene encoding prepropancreatic polypeptide.</title>
        <authorList>
            <person name="Nata K."/>
            <person name="Sugimoto T."/>
            <person name="Kohri K."/>
            <person name="Hidaka H."/>
            <person name="Hattori E."/>
            <person name="Yamamoto H."/>
            <person name="Yonekura H."/>
            <person name="Okamoto H."/>
        </authorList>
    </citation>
    <scope>NUCLEOTIDE SEQUENCE [GENOMIC DNA / MRNA]</scope>
    <source>
        <tissue>Liver</tissue>
    </source>
</reference>
<reference key="2">
    <citation type="journal article" date="1975" name="J. Biol. Chem.">
        <title>Isolation and characterization of a new pancreatic polypeptide hormone.</title>
        <authorList>
            <person name="Kimmel J.R."/>
            <person name="Hayden L.J."/>
            <person name="Pollock H.G."/>
        </authorList>
    </citation>
    <scope>PROTEIN SEQUENCE OF 26-61</scope>
    <source>
        <tissue>Pancreas</tissue>
    </source>
</reference>